<dbReference type="EC" id="3.6.4.-" evidence="1"/>
<dbReference type="EMBL" id="CP000771">
    <property type="protein sequence ID" value="ABS60019.1"/>
    <property type="molecule type" value="Genomic_DNA"/>
</dbReference>
<dbReference type="SMR" id="A7HJD6"/>
<dbReference type="STRING" id="381764.Fnod_0152"/>
<dbReference type="KEGG" id="fno:Fnod_0152"/>
<dbReference type="eggNOG" id="COG2255">
    <property type="taxonomic scope" value="Bacteria"/>
</dbReference>
<dbReference type="HOGENOM" id="CLU_055599_1_0_0"/>
<dbReference type="OrthoDB" id="9804478at2"/>
<dbReference type="Proteomes" id="UP000002415">
    <property type="component" value="Chromosome"/>
</dbReference>
<dbReference type="GO" id="GO:0005737">
    <property type="term" value="C:cytoplasm"/>
    <property type="evidence" value="ECO:0007669"/>
    <property type="project" value="UniProtKB-SubCell"/>
</dbReference>
<dbReference type="GO" id="GO:0048476">
    <property type="term" value="C:Holliday junction resolvase complex"/>
    <property type="evidence" value="ECO:0007669"/>
    <property type="project" value="UniProtKB-UniRule"/>
</dbReference>
<dbReference type="GO" id="GO:0005524">
    <property type="term" value="F:ATP binding"/>
    <property type="evidence" value="ECO:0007669"/>
    <property type="project" value="UniProtKB-UniRule"/>
</dbReference>
<dbReference type="GO" id="GO:0016887">
    <property type="term" value="F:ATP hydrolysis activity"/>
    <property type="evidence" value="ECO:0007669"/>
    <property type="project" value="InterPro"/>
</dbReference>
<dbReference type="GO" id="GO:0000400">
    <property type="term" value="F:four-way junction DNA binding"/>
    <property type="evidence" value="ECO:0007669"/>
    <property type="project" value="UniProtKB-UniRule"/>
</dbReference>
<dbReference type="GO" id="GO:0009378">
    <property type="term" value="F:four-way junction helicase activity"/>
    <property type="evidence" value="ECO:0007669"/>
    <property type="project" value="InterPro"/>
</dbReference>
<dbReference type="GO" id="GO:0006310">
    <property type="term" value="P:DNA recombination"/>
    <property type="evidence" value="ECO:0007669"/>
    <property type="project" value="UniProtKB-UniRule"/>
</dbReference>
<dbReference type="GO" id="GO:0006281">
    <property type="term" value="P:DNA repair"/>
    <property type="evidence" value="ECO:0007669"/>
    <property type="project" value="UniProtKB-UniRule"/>
</dbReference>
<dbReference type="CDD" id="cd00009">
    <property type="entry name" value="AAA"/>
    <property type="match status" value="1"/>
</dbReference>
<dbReference type="Gene3D" id="1.10.8.60">
    <property type="match status" value="1"/>
</dbReference>
<dbReference type="Gene3D" id="3.40.50.300">
    <property type="entry name" value="P-loop containing nucleotide triphosphate hydrolases"/>
    <property type="match status" value="1"/>
</dbReference>
<dbReference type="Gene3D" id="1.10.10.10">
    <property type="entry name" value="Winged helix-like DNA-binding domain superfamily/Winged helix DNA-binding domain"/>
    <property type="match status" value="1"/>
</dbReference>
<dbReference type="HAMAP" id="MF_00016">
    <property type="entry name" value="DNA_HJ_migration_RuvB"/>
    <property type="match status" value="1"/>
</dbReference>
<dbReference type="InterPro" id="IPR003593">
    <property type="entry name" value="AAA+_ATPase"/>
</dbReference>
<dbReference type="InterPro" id="IPR041445">
    <property type="entry name" value="AAA_lid_4"/>
</dbReference>
<dbReference type="InterPro" id="IPR004605">
    <property type="entry name" value="DNA_helicase_Holl-junc_RuvB"/>
</dbReference>
<dbReference type="InterPro" id="IPR027417">
    <property type="entry name" value="P-loop_NTPase"/>
</dbReference>
<dbReference type="InterPro" id="IPR008824">
    <property type="entry name" value="RuvB-like_N"/>
</dbReference>
<dbReference type="InterPro" id="IPR008823">
    <property type="entry name" value="RuvB_C"/>
</dbReference>
<dbReference type="InterPro" id="IPR036388">
    <property type="entry name" value="WH-like_DNA-bd_sf"/>
</dbReference>
<dbReference type="InterPro" id="IPR036390">
    <property type="entry name" value="WH_DNA-bd_sf"/>
</dbReference>
<dbReference type="NCBIfam" id="NF000868">
    <property type="entry name" value="PRK00080.1"/>
    <property type="match status" value="1"/>
</dbReference>
<dbReference type="NCBIfam" id="TIGR00635">
    <property type="entry name" value="ruvB"/>
    <property type="match status" value="1"/>
</dbReference>
<dbReference type="PANTHER" id="PTHR42848">
    <property type="match status" value="1"/>
</dbReference>
<dbReference type="PANTHER" id="PTHR42848:SF1">
    <property type="entry name" value="HOLLIDAY JUNCTION BRANCH MIGRATION COMPLEX SUBUNIT RUVB"/>
    <property type="match status" value="1"/>
</dbReference>
<dbReference type="Pfam" id="PF17864">
    <property type="entry name" value="AAA_lid_4"/>
    <property type="match status" value="1"/>
</dbReference>
<dbReference type="Pfam" id="PF05491">
    <property type="entry name" value="RuvB_C"/>
    <property type="match status" value="1"/>
</dbReference>
<dbReference type="Pfam" id="PF05496">
    <property type="entry name" value="RuvB_N"/>
    <property type="match status" value="1"/>
</dbReference>
<dbReference type="SMART" id="SM00382">
    <property type="entry name" value="AAA"/>
    <property type="match status" value="1"/>
</dbReference>
<dbReference type="SUPFAM" id="SSF52540">
    <property type="entry name" value="P-loop containing nucleoside triphosphate hydrolases"/>
    <property type="match status" value="1"/>
</dbReference>
<dbReference type="SUPFAM" id="SSF46785">
    <property type="entry name" value="Winged helix' DNA-binding domain"/>
    <property type="match status" value="1"/>
</dbReference>
<proteinExistence type="inferred from homology"/>
<gene>
    <name evidence="1" type="primary">ruvB</name>
    <name type="ordered locus">Fnod_0152</name>
</gene>
<evidence type="ECO:0000255" key="1">
    <source>
        <dbReference type="HAMAP-Rule" id="MF_00016"/>
    </source>
</evidence>
<accession>A7HJD6</accession>
<comment type="function">
    <text evidence="1">The RuvA-RuvB-RuvC complex processes Holliday junction (HJ) DNA during genetic recombination and DNA repair, while the RuvA-RuvB complex plays an important role in the rescue of blocked DNA replication forks via replication fork reversal (RFR). RuvA specifically binds to HJ cruciform DNA, conferring on it an open structure. The RuvB hexamer acts as an ATP-dependent pump, pulling dsDNA into and through the RuvAB complex. RuvB forms 2 homohexamers on either side of HJ DNA bound by 1 or 2 RuvA tetramers; 4 subunits per hexamer contact DNA at a time. Coordinated motions by a converter formed by DNA-disengaged RuvB subunits stimulates ATP hydrolysis and nucleotide exchange. Immobilization of the converter enables RuvB to convert the ATP-contained energy into a lever motion, pulling 2 nucleotides of DNA out of the RuvA tetramer per ATP hydrolyzed, thus driving DNA branch migration. The RuvB motors rotate together with the DNA substrate, which together with the progressing nucleotide cycle form the mechanistic basis for DNA recombination by continuous HJ branch migration. Branch migration allows RuvC to scan DNA until it finds its consensus sequence, where it cleaves and resolves cruciform DNA.</text>
</comment>
<comment type="catalytic activity">
    <reaction evidence="1">
        <text>ATP + H2O = ADP + phosphate + H(+)</text>
        <dbReference type="Rhea" id="RHEA:13065"/>
        <dbReference type="ChEBI" id="CHEBI:15377"/>
        <dbReference type="ChEBI" id="CHEBI:15378"/>
        <dbReference type="ChEBI" id="CHEBI:30616"/>
        <dbReference type="ChEBI" id="CHEBI:43474"/>
        <dbReference type="ChEBI" id="CHEBI:456216"/>
    </reaction>
</comment>
<comment type="subunit">
    <text evidence="1">Homohexamer. Forms an RuvA(8)-RuvB(12)-Holliday junction (HJ) complex. HJ DNA is sandwiched between 2 RuvA tetramers; dsDNA enters through RuvA and exits via RuvB. An RuvB hexamer assembles on each DNA strand where it exits the tetramer. Each RuvB hexamer is contacted by two RuvA subunits (via domain III) on 2 adjacent RuvB subunits; this complex drives branch migration. In the full resolvosome a probable DNA-RuvA(4)-RuvB(12)-RuvC(2) complex forms which resolves the HJ.</text>
</comment>
<comment type="subcellular location">
    <subcellularLocation>
        <location evidence="1">Cytoplasm</location>
    </subcellularLocation>
</comment>
<comment type="domain">
    <text evidence="1">Has 3 domains, the large (RuvB-L) and small ATPase (RuvB-S) domains and the C-terminal head (RuvB-H) domain. The head domain binds DNA, while the ATPase domains jointly bind ATP, ADP or are empty depending on the state of the subunit in the translocation cycle. During a single DNA translocation step the structure of each domain remains the same, but their relative positions change.</text>
</comment>
<comment type="similarity">
    <text evidence="1">Belongs to the RuvB family.</text>
</comment>
<reference key="1">
    <citation type="submission" date="2007-07" db="EMBL/GenBank/DDBJ databases">
        <title>Complete sequence of Fervidobacterium nodosum Rt17-B1.</title>
        <authorList>
            <consortium name="US DOE Joint Genome Institute"/>
            <person name="Copeland A."/>
            <person name="Lucas S."/>
            <person name="Lapidus A."/>
            <person name="Barry K."/>
            <person name="Glavina del Rio T."/>
            <person name="Dalin E."/>
            <person name="Tice H."/>
            <person name="Pitluck S."/>
            <person name="Saunders E."/>
            <person name="Brettin T."/>
            <person name="Bruce D."/>
            <person name="Detter J.C."/>
            <person name="Han C."/>
            <person name="Schmutz J."/>
            <person name="Larimer F."/>
            <person name="Land M."/>
            <person name="Hauser L."/>
            <person name="Kyrpides N."/>
            <person name="Mikhailova N."/>
            <person name="Nelson K."/>
            <person name="Gogarten J.P."/>
            <person name="Noll K."/>
            <person name="Richardson P."/>
        </authorList>
    </citation>
    <scope>NUCLEOTIDE SEQUENCE [LARGE SCALE GENOMIC DNA]</scope>
    <source>
        <strain>ATCC 35602 / DSM 5306 / Rt17-B1</strain>
    </source>
</reference>
<protein>
    <recommendedName>
        <fullName evidence="1">Holliday junction branch migration complex subunit RuvB</fullName>
        <ecNumber evidence="1">3.6.4.-</ecNumber>
    </recommendedName>
</protein>
<sequence length="347" mass="38503">MEKINEYGSERIVSPERTGYDSYSLRPKFLSEYIGQENIKERLKLAIQASKMRGEQLDHILLAGPPGLGKTTLATIIANELNANIHVTSGPILEKQGDLAAILTNLEAGDVLFIDEIHRMNRNVEEILYSAMEDFQVDIMIGKGPAARSIRVELQPFTLIGATTRSGLLTSPLRNRFGMIFEMNFYTQEELKMIITRAAEVMGTLIDDDAALSIAKRSRGTPRIAIRLLKRVRDLSTVRGSENITLNIVEEVMRLLGVDEFGLDEMDRKILKTIIEIYKGGPVGLKSLAASLGITEDTISEVYEPFLVQSGFIARGARGRIATEKAYKYLGYNTLPGGLFDGFGNIE</sequence>
<name>RUVB_FERNB</name>
<organism>
    <name type="scientific">Fervidobacterium nodosum (strain ATCC 35602 / DSM 5306 / Rt17-B1)</name>
    <dbReference type="NCBI Taxonomy" id="381764"/>
    <lineage>
        <taxon>Bacteria</taxon>
        <taxon>Thermotogati</taxon>
        <taxon>Thermotogota</taxon>
        <taxon>Thermotogae</taxon>
        <taxon>Thermotogales</taxon>
        <taxon>Fervidobacteriaceae</taxon>
        <taxon>Fervidobacterium</taxon>
    </lineage>
</organism>
<feature type="chain" id="PRO_0000322793" description="Holliday junction branch migration complex subunit RuvB">
    <location>
        <begin position="1"/>
        <end position="347"/>
    </location>
</feature>
<feature type="region of interest" description="Large ATPase domain (RuvB-L)" evidence="1">
    <location>
        <begin position="4"/>
        <end position="186"/>
    </location>
</feature>
<feature type="region of interest" description="Small ATPAse domain (RuvB-S)" evidence="1">
    <location>
        <begin position="187"/>
        <end position="257"/>
    </location>
</feature>
<feature type="region of interest" description="Head domain (RuvB-H)" evidence="1">
    <location>
        <begin position="260"/>
        <end position="347"/>
    </location>
</feature>
<feature type="binding site" evidence="1">
    <location>
        <position position="25"/>
    </location>
    <ligand>
        <name>ATP</name>
        <dbReference type="ChEBI" id="CHEBI:30616"/>
    </ligand>
</feature>
<feature type="binding site" evidence="1">
    <location>
        <position position="26"/>
    </location>
    <ligand>
        <name>ATP</name>
        <dbReference type="ChEBI" id="CHEBI:30616"/>
    </ligand>
</feature>
<feature type="binding site" evidence="1">
    <location>
        <position position="67"/>
    </location>
    <ligand>
        <name>ATP</name>
        <dbReference type="ChEBI" id="CHEBI:30616"/>
    </ligand>
</feature>
<feature type="binding site" evidence="1">
    <location>
        <position position="70"/>
    </location>
    <ligand>
        <name>ATP</name>
        <dbReference type="ChEBI" id="CHEBI:30616"/>
    </ligand>
</feature>
<feature type="binding site" evidence="1">
    <location>
        <position position="71"/>
    </location>
    <ligand>
        <name>ATP</name>
        <dbReference type="ChEBI" id="CHEBI:30616"/>
    </ligand>
</feature>
<feature type="binding site" evidence="1">
    <location>
        <position position="71"/>
    </location>
    <ligand>
        <name>Mg(2+)</name>
        <dbReference type="ChEBI" id="CHEBI:18420"/>
    </ligand>
</feature>
<feature type="binding site" evidence="1">
    <location>
        <position position="72"/>
    </location>
    <ligand>
        <name>ATP</name>
        <dbReference type="ChEBI" id="CHEBI:30616"/>
    </ligand>
</feature>
<feature type="binding site" evidence="1">
    <location>
        <begin position="133"/>
        <end position="135"/>
    </location>
    <ligand>
        <name>ATP</name>
        <dbReference type="ChEBI" id="CHEBI:30616"/>
    </ligand>
</feature>
<feature type="binding site" evidence="1">
    <location>
        <position position="176"/>
    </location>
    <ligand>
        <name>ATP</name>
        <dbReference type="ChEBI" id="CHEBI:30616"/>
    </ligand>
</feature>
<feature type="binding site" evidence="1">
    <location>
        <position position="186"/>
    </location>
    <ligand>
        <name>ATP</name>
        <dbReference type="ChEBI" id="CHEBI:30616"/>
    </ligand>
</feature>
<feature type="binding site" evidence="1">
    <location>
        <position position="223"/>
    </location>
    <ligand>
        <name>ATP</name>
        <dbReference type="ChEBI" id="CHEBI:30616"/>
    </ligand>
</feature>
<feature type="binding site" evidence="1">
    <location>
        <position position="315"/>
    </location>
    <ligand>
        <name>DNA</name>
        <dbReference type="ChEBI" id="CHEBI:16991"/>
    </ligand>
</feature>
<feature type="binding site" evidence="1">
    <location>
        <position position="320"/>
    </location>
    <ligand>
        <name>DNA</name>
        <dbReference type="ChEBI" id="CHEBI:16991"/>
    </ligand>
</feature>
<keyword id="KW-0067">ATP-binding</keyword>
<keyword id="KW-0963">Cytoplasm</keyword>
<keyword id="KW-0227">DNA damage</keyword>
<keyword id="KW-0233">DNA recombination</keyword>
<keyword id="KW-0234">DNA repair</keyword>
<keyword id="KW-0238">DNA-binding</keyword>
<keyword id="KW-0378">Hydrolase</keyword>
<keyword id="KW-0547">Nucleotide-binding</keyword>
<keyword id="KW-1185">Reference proteome</keyword>